<gene>
    <name type="primary">TRIM16</name>
</gene>
<comment type="function">
    <text evidence="1">E3 ubiquitin ligase that plays an essential role in the organization of autophagic response and ubiquitination upon lysosomal and phagosomal damages. Plays a role in the stress-induced biogenesis and degradation of protein aggresomes by regulating the p62-KEAP1-NRF2 signaling and particularly by modulating the ubiquitination levels and thus stability of NRF2. Acts as a scaffold protein and facilitates autophagic degradation of protein aggregates by interacting with p62/SQSTM, ATG16L1 and LC3B/MAP1LC3B. In turn, protects the cell against oxidative stress-induced cell death as a consequence of endomembrane damage.</text>
</comment>
<comment type="catalytic activity">
    <reaction evidence="1">
        <text>S-ubiquitinyl-[E2 ubiquitin-conjugating enzyme]-L-cysteine + [acceptor protein]-L-lysine = [E2 ubiquitin-conjugating enzyme]-L-cysteine + N(6)-ubiquitinyl-[acceptor protein]-L-lysine.</text>
        <dbReference type="EC" id="2.3.2.27"/>
    </reaction>
</comment>
<comment type="subunit">
    <text evidence="1">Homodimerizes via its coiled-coil domain. Heterodimerizes with MID1, TRIM24 and PML. Interacts with Galectin-3/LGALS3 in a ULK1-dependent manner; this interaction mediates autophagy of damage endomembranes. Interacts with BECN1. Interacts with ATG16L1. Interacts with p62/SQSTM and LC3B/MAP1LC3B.</text>
</comment>
<comment type="subcellular location">
    <subcellularLocation>
        <location evidence="1">Cytoplasm</location>
    </subcellularLocation>
</comment>
<comment type="PTM">
    <text evidence="1">Phosphorylated by ULK1.</text>
</comment>
<comment type="PTM">
    <text evidence="1">Auto-ubiquitinates via its B-Boxes.</text>
</comment>
<comment type="similarity">
    <text evidence="6">Belongs to the TRIM/RBCC family.</text>
</comment>
<feature type="chain" id="PRO_0000314286" description="E3 ubiquitin-protein ligase TRIM16">
    <location>
        <begin position="1"/>
        <end position="564"/>
    </location>
</feature>
<feature type="domain" description="B30.2/SPRY" evidence="4">
    <location>
        <begin position="355"/>
        <end position="553"/>
    </location>
</feature>
<feature type="zinc finger region" description="B box-type 1" evidence="3">
    <location>
        <begin position="72"/>
        <end position="122"/>
    </location>
</feature>
<feature type="zinc finger region" description="B box-type 2" evidence="3">
    <location>
        <begin position="126"/>
        <end position="165"/>
    </location>
</feature>
<feature type="region of interest" description="Disordered" evidence="5">
    <location>
        <begin position="1"/>
        <end position="70"/>
    </location>
</feature>
<feature type="coiled-coil region" evidence="2">
    <location>
        <begin position="165"/>
        <end position="203"/>
    </location>
</feature>
<feature type="coiled-coil region" evidence="2">
    <location>
        <begin position="243"/>
        <end position="274"/>
    </location>
</feature>
<feature type="coiled-coil region" evidence="2">
    <location>
        <begin position="320"/>
        <end position="340"/>
    </location>
</feature>
<feature type="compositionally biased region" description="Low complexity" evidence="5">
    <location>
        <begin position="24"/>
        <end position="39"/>
    </location>
</feature>
<feature type="binding site" evidence="3">
    <location>
        <position position="131"/>
    </location>
    <ligand>
        <name>Zn(2+)</name>
        <dbReference type="ChEBI" id="CHEBI:29105"/>
    </ligand>
</feature>
<feature type="binding site" evidence="3">
    <location>
        <position position="134"/>
    </location>
    <ligand>
        <name>Zn(2+)</name>
        <dbReference type="ChEBI" id="CHEBI:29105"/>
    </ligand>
</feature>
<feature type="binding site" evidence="3">
    <location>
        <position position="153"/>
    </location>
    <ligand>
        <name>Zn(2+)</name>
        <dbReference type="ChEBI" id="CHEBI:29105"/>
    </ligand>
</feature>
<feature type="binding site" evidence="3">
    <location>
        <position position="157"/>
    </location>
    <ligand>
        <name>Zn(2+)</name>
        <dbReference type="ChEBI" id="CHEBI:29105"/>
    </ligand>
</feature>
<feature type="modified residue" description="Phosphoserine" evidence="1">
    <location>
        <position position="116"/>
    </location>
</feature>
<feature type="modified residue" description="Phosphoserine" evidence="1">
    <location>
        <position position="203"/>
    </location>
</feature>
<dbReference type="EC" id="2.3.2.27" evidence="1"/>
<dbReference type="EMBL" id="CR860258">
    <property type="protein sequence ID" value="CAH92400.1"/>
    <property type="molecule type" value="mRNA"/>
</dbReference>
<dbReference type="RefSeq" id="NP_001126416.1">
    <property type="nucleotide sequence ID" value="NM_001132944.1"/>
</dbReference>
<dbReference type="SMR" id="Q5R760"/>
<dbReference type="FunCoup" id="Q5R760">
    <property type="interactions" value="576"/>
</dbReference>
<dbReference type="STRING" id="9601.ENSPPYP00000009005"/>
<dbReference type="GeneID" id="100173399"/>
<dbReference type="KEGG" id="pon:100173399"/>
<dbReference type="CTD" id="10626"/>
<dbReference type="eggNOG" id="ENOG502QRVY">
    <property type="taxonomic scope" value="Eukaryota"/>
</dbReference>
<dbReference type="InParanoid" id="Q5R760"/>
<dbReference type="OrthoDB" id="6270329at2759"/>
<dbReference type="Proteomes" id="UP000001595">
    <property type="component" value="Unplaced"/>
</dbReference>
<dbReference type="GO" id="GO:0005737">
    <property type="term" value="C:cytoplasm"/>
    <property type="evidence" value="ECO:0000250"/>
    <property type="project" value="UniProtKB"/>
</dbReference>
<dbReference type="GO" id="GO:0016605">
    <property type="term" value="C:PML body"/>
    <property type="evidence" value="ECO:0000250"/>
    <property type="project" value="UniProtKB"/>
</dbReference>
<dbReference type="GO" id="GO:0003677">
    <property type="term" value="F:DNA binding"/>
    <property type="evidence" value="ECO:0000250"/>
    <property type="project" value="UniProtKB"/>
</dbReference>
<dbReference type="GO" id="GO:0019966">
    <property type="term" value="F:interleukin-1 binding"/>
    <property type="evidence" value="ECO:0000250"/>
    <property type="project" value="UniProtKB"/>
</dbReference>
<dbReference type="GO" id="GO:0032089">
    <property type="term" value="F:NACHT domain binding"/>
    <property type="evidence" value="ECO:0000250"/>
    <property type="project" value="UniProtKB"/>
</dbReference>
<dbReference type="GO" id="GO:0016740">
    <property type="term" value="F:transferase activity"/>
    <property type="evidence" value="ECO:0007669"/>
    <property type="project" value="UniProtKB-KW"/>
</dbReference>
<dbReference type="GO" id="GO:0008270">
    <property type="term" value="F:zinc ion binding"/>
    <property type="evidence" value="ECO:0007669"/>
    <property type="project" value="UniProtKB-KW"/>
</dbReference>
<dbReference type="GO" id="GO:0045893">
    <property type="term" value="P:positive regulation of DNA-templated transcription"/>
    <property type="evidence" value="ECO:0000250"/>
    <property type="project" value="UniProtKB"/>
</dbReference>
<dbReference type="GO" id="GO:0032731">
    <property type="term" value="P:positive regulation of interleukin-1 beta production"/>
    <property type="evidence" value="ECO:0000250"/>
    <property type="project" value="UniProtKB"/>
</dbReference>
<dbReference type="GO" id="GO:0045618">
    <property type="term" value="P:positive regulation of keratinocyte differentiation"/>
    <property type="evidence" value="ECO:0000250"/>
    <property type="project" value="UniProtKB"/>
</dbReference>
<dbReference type="GO" id="GO:0048386">
    <property type="term" value="P:positive regulation of retinoic acid receptor signaling pathway"/>
    <property type="evidence" value="ECO:0000250"/>
    <property type="project" value="UniProtKB"/>
</dbReference>
<dbReference type="GO" id="GO:0060416">
    <property type="term" value="P:response to growth hormone"/>
    <property type="evidence" value="ECO:0000250"/>
    <property type="project" value="UniProtKB"/>
</dbReference>
<dbReference type="GO" id="GO:0032526">
    <property type="term" value="P:response to retinoic acid"/>
    <property type="evidence" value="ECO:0000250"/>
    <property type="project" value="UniProtKB"/>
</dbReference>
<dbReference type="CDD" id="cd19839">
    <property type="entry name" value="Bbox1_TRIM16"/>
    <property type="match status" value="1"/>
</dbReference>
<dbReference type="CDD" id="cd12890">
    <property type="entry name" value="SPRY_PRY_TRIM16"/>
    <property type="match status" value="1"/>
</dbReference>
<dbReference type="FunFam" id="4.10.830.40:FF:000002">
    <property type="entry name" value="probable E3 ubiquitin-protein ligase MID2"/>
    <property type="match status" value="1"/>
</dbReference>
<dbReference type="FunFam" id="2.60.120.920:FF:000046">
    <property type="entry name" value="tripartite motif-containing protein 16"/>
    <property type="match status" value="1"/>
</dbReference>
<dbReference type="Gene3D" id="2.60.120.920">
    <property type="match status" value="1"/>
</dbReference>
<dbReference type="Gene3D" id="4.10.830.40">
    <property type="match status" value="1"/>
</dbReference>
<dbReference type="Gene3D" id="3.30.160.60">
    <property type="entry name" value="Classic Zinc Finger"/>
    <property type="match status" value="1"/>
</dbReference>
<dbReference type="InterPro" id="IPR001870">
    <property type="entry name" value="B30.2/SPRY"/>
</dbReference>
<dbReference type="InterPro" id="IPR043136">
    <property type="entry name" value="B30.2/SPRY_sf"/>
</dbReference>
<dbReference type="InterPro" id="IPR003879">
    <property type="entry name" value="Butyrophylin_SPRY"/>
</dbReference>
<dbReference type="InterPro" id="IPR013320">
    <property type="entry name" value="ConA-like_dom_sf"/>
</dbReference>
<dbReference type="InterPro" id="IPR051051">
    <property type="entry name" value="E3_ubiq-ligase_TRIM/RNF"/>
</dbReference>
<dbReference type="InterPro" id="IPR006574">
    <property type="entry name" value="PRY"/>
</dbReference>
<dbReference type="InterPro" id="IPR003877">
    <property type="entry name" value="SPRY_dom"/>
</dbReference>
<dbReference type="InterPro" id="IPR000315">
    <property type="entry name" value="Znf_B-box"/>
</dbReference>
<dbReference type="PANTHER" id="PTHR25465">
    <property type="entry name" value="B-BOX DOMAIN CONTAINING"/>
    <property type="match status" value="1"/>
</dbReference>
<dbReference type="PANTHER" id="PTHR25465:SF10">
    <property type="entry name" value="TRIPARTITE MOTIF-CONTAINING PROTEIN 16-RELATED"/>
    <property type="match status" value="1"/>
</dbReference>
<dbReference type="Pfam" id="PF13765">
    <property type="entry name" value="PRY"/>
    <property type="match status" value="1"/>
</dbReference>
<dbReference type="Pfam" id="PF00622">
    <property type="entry name" value="SPRY"/>
    <property type="match status" value="1"/>
</dbReference>
<dbReference type="Pfam" id="PF00643">
    <property type="entry name" value="zf-B_box"/>
    <property type="match status" value="1"/>
</dbReference>
<dbReference type="PRINTS" id="PR01407">
    <property type="entry name" value="BUTYPHLNCDUF"/>
</dbReference>
<dbReference type="SMART" id="SM00336">
    <property type="entry name" value="BBOX"/>
    <property type="match status" value="2"/>
</dbReference>
<dbReference type="SMART" id="SM00589">
    <property type="entry name" value="PRY"/>
    <property type="match status" value="1"/>
</dbReference>
<dbReference type="SMART" id="SM00449">
    <property type="entry name" value="SPRY"/>
    <property type="match status" value="1"/>
</dbReference>
<dbReference type="SUPFAM" id="SSF57845">
    <property type="entry name" value="B-box zinc-binding domain"/>
    <property type="match status" value="1"/>
</dbReference>
<dbReference type="SUPFAM" id="SSF49899">
    <property type="entry name" value="Concanavalin A-like lectins/glucanases"/>
    <property type="match status" value="1"/>
</dbReference>
<dbReference type="PROSITE" id="PS50188">
    <property type="entry name" value="B302_SPRY"/>
    <property type="match status" value="1"/>
</dbReference>
<dbReference type="PROSITE" id="PS50119">
    <property type="entry name" value="ZF_BBOX"/>
    <property type="match status" value="1"/>
</dbReference>
<accession>Q5R760</accession>
<organism>
    <name type="scientific">Pongo abelii</name>
    <name type="common">Sumatran orangutan</name>
    <name type="synonym">Pongo pygmaeus abelii</name>
    <dbReference type="NCBI Taxonomy" id="9601"/>
    <lineage>
        <taxon>Eukaryota</taxon>
        <taxon>Metazoa</taxon>
        <taxon>Chordata</taxon>
        <taxon>Craniata</taxon>
        <taxon>Vertebrata</taxon>
        <taxon>Euteleostomi</taxon>
        <taxon>Mammalia</taxon>
        <taxon>Eutheria</taxon>
        <taxon>Euarchontoglires</taxon>
        <taxon>Primates</taxon>
        <taxon>Haplorrhini</taxon>
        <taxon>Catarrhini</taxon>
        <taxon>Hominidae</taxon>
        <taxon>Pongo</taxon>
    </lineage>
</organism>
<sequence length="564" mass="63965">MAELDLMAPGPLPRATAQPPAPLSPDSGSPSPDSGSASPVEEEDVGSSEKLGRETEEQDSDPAEQGDPAGEGKEVLCDFCLDDTRRVKAVKSCLTCMVNYCEEHLQPHQVNIKLQSHLLTEPVKDHNWRYCPAHHSPLSAFCCPDQQCICQDCCQEHSGHTIVSLDAARRDKEAELQCTQLDLERKLKLNENAISRLQANQKSVLVSVSEVKAVAEMQFGELLAAVRKAQANVMLFLEEKEQAALSQANGIKAHLEYRSAEMEKSKQELERMAAISNTVQFLEEYCKFKNTEDITFPSVYVGLKDKLSGIRKVITESTVHLIQLLENYKKKLQEFSKEEEYDIRTQVSAVVQRKYWTSKPEPSTREQFLQYAYDITFDPDTAHKYLRLQEENRKVTNTTPWEHPYPDLPSRFLHWRQVLSQQSLYLHRYYFEVEIFGAGTYVGLTCKGIDRKGEERNSCISGNNFSWSLQWNGKEFTAWYSDMETPLKAGPFRRLGVYIDFPGGILSFYGVEYDTMTLVHKFACKFSEPVYAAFWLSKKENAIRIVDLGEEPEKPAPSLVGTAP</sequence>
<keyword id="KW-0175">Coiled coil</keyword>
<keyword id="KW-0963">Cytoplasm</keyword>
<keyword id="KW-0479">Metal-binding</keyword>
<keyword id="KW-0597">Phosphoprotein</keyword>
<keyword id="KW-1185">Reference proteome</keyword>
<keyword id="KW-0677">Repeat</keyword>
<keyword id="KW-0808">Transferase</keyword>
<keyword id="KW-0832">Ubl conjugation</keyword>
<keyword id="KW-0833">Ubl conjugation pathway</keyword>
<keyword id="KW-0862">Zinc</keyword>
<keyword id="KW-0863">Zinc-finger</keyword>
<protein>
    <recommendedName>
        <fullName>E3 ubiquitin-protein ligase TRIM16</fullName>
        <ecNumber evidence="1">2.3.2.27</ecNumber>
    </recommendedName>
</protein>
<proteinExistence type="evidence at transcript level"/>
<evidence type="ECO:0000250" key="1">
    <source>
        <dbReference type="UniProtKB" id="O95361"/>
    </source>
</evidence>
<evidence type="ECO:0000255" key="2"/>
<evidence type="ECO:0000255" key="3">
    <source>
        <dbReference type="PROSITE-ProRule" id="PRU00024"/>
    </source>
</evidence>
<evidence type="ECO:0000255" key="4">
    <source>
        <dbReference type="PROSITE-ProRule" id="PRU00548"/>
    </source>
</evidence>
<evidence type="ECO:0000256" key="5">
    <source>
        <dbReference type="SAM" id="MobiDB-lite"/>
    </source>
</evidence>
<evidence type="ECO:0000305" key="6"/>
<name>TRI16_PONAB</name>
<reference key="1">
    <citation type="submission" date="2004-11" db="EMBL/GenBank/DDBJ databases">
        <authorList>
            <consortium name="The German cDNA consortium"/>
        </authorList>
    </citation>
    <scope>NUCLEOTIDE SEQUENCE [LARGE SCALE MRNA]</scope>
    <source>
        <tissue>Heart</tissue>
    </source>
</reference>